<dbReference type="EC" id="2.7.7.77" evidence="1"/>
<dbReference type="EMBL" id="CP000720">
    <property type="protein sequence ID" value="ABS49478.1"/>
    <property type="molecule type" value="Genomic_DNA"/>
</dbReference>
<dbReference type="RefSeq" id="WP_011991007.1">
    <property type="nucleotide sequence ID" value="NC_009708.1"/>
</dbReference>
<dbReference type="SMR" id="A7FCP0"/>
<dbReference type="GeneID" id="49788018"/>
<dbReference type="KEGG" id="ypi:YpsIP31758_0017"/>
<dbReference type="HOGENOM" id="CLU_055597_5_1_6"/>
<dbReference type="Proteomes" id="UP000002412">
    <property type="component" value="Chromosome"/>
</dbReference>
<dbReference type="GO" id="GO:0005737">
    <property type="term" value="C:cytoplasm"/>
    <property type="evidence" value="ECO:0007669"/>
    <property type="project" value="UniProtKB-SubCell"/>
</dbReference>
<dbReference type="GO" id="GO:0005525">
    <property type="term" value="F:GTP binding"/>
    <property type="evidence" value="ECO:0007669"/>
    <property type="project" value="UniProtKB-UniRule"/>
</dbReference>
<dbReference type="GO" id="GO:0046872">
    <property type="term" value="F:metal ion binding"/>
    <property type="evidence" value="ECO:0007669"/>
    <property type="project" value="UniProtKB-KW"/>
</dbReference>
<dbReference type="GO" id="GO:0061603">
    <property type="term" value="F:molybdenum cofactor guanylyltransferase activity"/>
    <property type="evidence" value="ECO:0007669"/>
    <property type="project" value="UniProtKB-EC"/>
</dbReference>
<dbReference type="GO" id="GO:1902758">
    <property type="term" value="P:bis(molybdopterin guanine dinucleotide)molybdenum biosynthetic process"/>
    <property type="evidence" value="ECO:0007669"/>
    <property type="project" value="TreeGrafter"/>
</dbReference>
<dbReference type="CDD" id="cd02503">
    <property type="entry name" value="MobA"/>
    <property type="match status" value="1"/>
</dbReference>
<dbReference type="Gene3D" id="3.90.550.10">
    <property type="entry name" value="Spore Coat Polysaccharide Biosynthesis Protein SpsA, Chain A"/>
    <property type="match status" value="1"/>
</dbReference>
<dbReference type="HAMAP" id="MF_00316">
    <property type="entry name" value="MobA"/>
    <property type="match status" value="1"/>
</dbReference>
<dbReference type="InterPro" id="IPR025877">
    <property type="entry name" value="MobA-like_NTP_Trfase"/>
</dbReference>
<dbReference type="InterPro" id="IPR013482">
    <property type="entry name" value="Molybde_CF_guanTrfase"/>
</dbReference>
<dbReference type="InterPro" id="IPR029044">
    <property type="entry name" value="Nucleotide-diphossugar_trans"/>
</dbReference>
<dbReference type="NCBIfam" id="TIGR02665">
    <property type="entry name" value="molyb_mobA"/>
    <property type="match status" value="1"/>
</dbReference>
<dbReference type="PANTHER" id="PTHR19136">
    <property type="entry name" value="MOLYBDENUM COFACTOR GUANYLYLTRANSFERASE"/>
    <property type="match status" value="1"/>
</dbReference>
<dbReference type="PANTHER" id="PTHR19136:SF81">
    <property type="entry name" value="MOLYBDENUM COFACTOR GUANYLYLTRANSFERASE"/>
    <property type="match status" value="1"/>
</dbReference>
<dbReference type="Pfam" id="PF12804">
    <property type="entry name" value="NTP_transf_3"/>
    <property type="match status" value="1"/>
</dbReference>
<dbReference type="SUPFAM" id="SSF53448">
    <property type="entry name" value="Nucleotide-diphospho-sugar transferases"/>
    <property type="match status" value="1"/>
</dbReference>
<name>MOBA_YERP3</name>
<accession>A7FCP0</accession>
<evidence type="ECO:0000255" key="1">
    <source>
        <dbReference type="HAMAP-Rule" id="MF_00316"/>
    </source>
</evidence>
<keyword id="KW-0963">Cytoplasm</keyword>
<keyword id="KW-0342">GTP-binding</keyword>
<keyword id="KW-0460">Magnesium</keyword>
<keyword id="KW-0479">Metal-binding</keyword>
<keyword id="KW-0501">Molybdenum cofactor biosynthesis</keyword>
<keyword id="KW-0547">Nucleotide-binding</keyword>
<keyword id="KW-0808">Transferase</keyword>
<proteinExistence type="inferred from homology"/>
<organism>
    <name type="scientific">Yersinia pseudotuberculosis serotype O:1b (strain IP 31758)</name>
    <dbReference type="NCBI Taxonomy" id="349747"/>
    <lineage>
        <taxon>Bacteria</taxon>
        <taxon>Pseudomonadati</taxon>
        <taxon>Pseudomonadota</taxon>
        <taxon>Gammaproteobacteria</taxon>
        <taxon>Enterobacterales</taxon>
        <taxon>Yersiniaceae</taxon>
        <taxon>Yersinia</taxon>
    </lineage>
</organism>
<sequence length="195" mass="21459">MQPNITGVILAGGRSSRMGGNDKGLIPLNGKPLFQYVIDRFKPQVSDLLINANRNQGLYKESGIPVIDDIITGFVGPLAGMHAGLSYASTEWVVFAPCDVPALPSDLVSQLWQGKKQALAAYANDDERAHPTFALMHISLKTQLADYLIRGDRKLMLFLDSINAQRVKFSGKADLFSNLNTPADCDLWEQKRRGQ</sequence>
<gene>
    <name evidence="1" type="primary">mobA</name>
    <name type="ordered locus">YpsIP31758_0017</name>
</gene>
<feature type="chain" id="PRO_1000059452" description="Molybdenum cofactor guanylyltransferase">
    <location>
        <begin position="1"/>
        <end position="195"/>
    </location>
</feature>
<feature type="binding site" evidence="1">
    <location>
        <begin position="10"/>
        <end position="12"/>
    </location>
    <ligand>
        <name>GTP</name>
        <dbReference type="ChEBI" id="CHEBI:37565"/>
    </ligand>
</feature>
<feature type="binding site" evidence="1">
    <location>
        <position position="23"/>
    </location>
    <ligand>
        <name>GTP</name>
        <dbReference type="ChEBI" id="CHEBI:37565"/>
    </ligand>
</feature>
<feature type="binding site" evidence="1">
    <location>
        <position position="51"/>
    </location>
    <ligand>
        <name>GTP</name>
        <dbReference type="ChEBI" id="CHEBI:37565"/>
    </ligand>
</feature>
<feature type="binding site" evidence="1">
    <location>
        <position position="69"/>
    </location>
    <ligand>
        <name>GTP</name>
        <dbReference type="ChEBI" id="CHEBI:37565"/>
    </ligand>
</feature>
<feature type="binding site" evidence="1">
    <location>
        <position position="99"/>
    </location>
    <ligand>
        <name>GTP</name>
        <dbReference type="ChEBI" id="CHEBI:37565"/>
    </ligand>
</feature>
<feature type="binding site" evidence="1">
    <location>
        <position position="99"/>
    </location>
    <ligand>
        <name>Mg(2+)</name>
        <dbReference type="ChEBI" id="CHEBI:18420"/>
    </ligand>
</feature>
<comment type="function">
    <text evidence="1">Transfers a GMP moiety from GTP to Mo-molybdopterin (Mo-MPT) cofactor (Moco or molybdenum cofactor) to form Mo-molybdopterin guanine dinucleotide (Mo-MGD) cofactor.</text>
</comment>
<comment type="catalytic activity">
    <reaction evidence="1">
        <text>Mo-molybdopterin + GTP + H(+) = Mo-molybdopterin guanine dinucleotide + diphosphate</text>
        <dbReference type="Rhea" id="RHEA:34243"/>
        <dbReference type="ChEBI" id="CHEBI:15378"/>
        <dbReference type="ChEBI" id="CHEBI:33019"/>
        <dbReference type="ChEBI" id="CHEBI:37565"/>
        <dbReference type="ChEBI" id="CHEBI:71302"/>
        <dbReference type="ChEBI" id="CHEBI:71310"/>
        <dbReference type="EC" id="2.7.7.77"/>
    </reaction>
</comment>
<comment type="cofactor">
    <cofactor evidence="1">
        <name>Mg(2+)</name>
        <dbReference type="ChEBI" id="CHEBI:18420"/>
    </cofactor>
</comment>
<comment type="subunit">
    <text evidence="1">Monomer.</text>
</comment>
<comment type="subcellular location">
    <subcellularLocation>
        <location evidence="1">Cytoplasm</location>
    </subcellularLocation>
</comment>
<comment type="domain">
    <text evidence="1">The N-terminal domain determines nucleotide recognition and specific binding, while the C-terminal domain determines the specific binding to the target protein.</text>
</comment>
<comment type="similarity">
    <text evidence="1">Belongs to the MobA family.</text>
</comment>
<protein>
    <recommendedName>
        <fullName evidence="1">Molybdenum cofactor guanylyltransferase</fullName>
        <shortName evidence="1">MoCo guanylyltransferase</shortName>
        <ecNumber evidence="1">2.7.7.77</ecNumber>
    </recommendedName>
    <alternativeName>
        <fullName evidence="1">GTP:molybdopterin guanylyltransferase</fullName>
    </alternativeName>
    <alternativeName>
        <fullName evidence="1">Mo-MPT guanylyltransferase</fullName>
    </alternativeName>
    <alternativeName>
        <fullName evidence="1">Molybdopterin guanylyltransferase</fullName>
    </alternativeName>
    <alternativeName>
        <fullName evidence="1">Molybdopterin-guanine dinucleotide synthase</fullName>
        <shortName evidence="1">MGD synthase</shortName>
    </alternativeName>
</protein>
<reference key="1">
    <citation type="journal article" date="2007" name="PLoS Genet.">
        <title>The complete genome sequence of Yersinia pseudotuberculosis IP31758, the causative agent of Far East scarlet-like fever.</title>
        <authorList>
            <person name="Eppinger M."/>
            <person name="Rosovitz M.J."/>
            <person name="Fricke W.F."/>
            <person name="Rasko D.A."/>
            <person name="Kokorina G."/>
            <person name="Fayolle C."/>
            <person name="Lindler L.E."/>
            <person name="Carniel E."/>
            <person name="Ravel J."/>
        </authorList>
    </citation>
    <scope>NUCLEOTIDE SEQUENCE [LARGE SCALE GENOMIC DNA]</scope>
    <source>
        <strain>IP 31758</strain>
    </source>
</reference>